<keyword id="KW-0254">Endocytosis</keyword>
<keyword id="KW-0967">Endosome</keyword>
<keyword id="KW-0472">Membrane</keyword>
<keyword id="KW-0581">Phagocytosis</keyword>
<keyword id="KW-1185">Reference proteome</keyword>
<keyword id="KW-0732">Signal</keyword>
<keyword id="KW-0812">Transmembrane</keyword>
<keyword id="KW-1133">Transmembrane helix</keyword>
<gene>
    <name type="primary">p80</name>
    <name type="ORF">DDB_G0287297</name>
</gene>
<dbReference type="EMBL" id="AJ315489">
    <property type="protein sequence ID" value="CAC86573.1"/>
    <property type="molecule type" value="mRNA"/>
</dbReference>
<dbReference type="EMBL" id="AAFI02000100">
    <property type="protein sequence ID" value="EAL63716.2"/>
    <property type="molecule type" value="Genomic_DNA"/>
</dbReference>
<dbReference type="RefSeq" id="XP_637238.2">
    <property type="nucleotide sequence ID" value="XM_632146.2"/>
</dbReference>
<dbReference type="SMR" id="Q7YXD4"/>
<dbReference type="STRING" id="44689.Q7YXD4"/>
<dbReference type="GlyGen" id="Q7YXD4">
    <property type="glycosylation" value="1 site"/>
</dbReference>
<dbReference type="PaxDb" id="44689-DDB0191340"/>
<dbReference type="ABCD" id="Q7YXD4">
    <property type="antibodies" value="2 sequenced antibodies"/>
</dbReference>
<dbReference type="EnsemblProtists" id="EAL63716">
    <property type="protein sequence ID" value="EAL63716"/>
    <property type="gene ID" value="DDB_G0287297"/>
</dbReference>
<dbReference type="GeneID" id="8626069"/>
<dbReference type="KEGG" id="ddi:DDB_G0287297"/>
<dbReference type="dictyBase" id="DDB_G0287297">
    <property type="gene designation" value="p80"/>
</dbReference>
<dbReference type="VEuPathDB" id="AmoebaDB:DDB_G0287297"/>
<dbReference type="eggNOG" id="KOG3386">
    <property type="taxonomic scope" value="Eukaryota"/>
</dbReference>
<dbReference type="HOGENOM" id="CLU_453728_0_0_1"/>
<dbReference type="InParanoid" id="Q7YXD4"/>
<dbReference type="OMA" id="CNCVHSA"/>
<dbReference type="PhylomeDB" id="Q7YXD4"/>
<dbReference type="PRO" id="PR:Q7YXD4"/>
<dbReference type="Proteomes" id="UP000002195">
    <property type="component" value="Chromosome 5"/>
</dbReference>
<dbReference type="GO" id="GO:0009986">
    <property type="term" value="C:cell surface"/>
    <property type="evidence" value="ECO:0000314"/>
    <property type="project" value="dictyBase"/>
</dbReference>
<dbReference type="GO" id="GO:0030666">
    <property type="term" value="C:endocytic vesicle membrane"/>
    <property type="evidence" value="ECO:0000314"/>
    <property type="project" value="dictyBase"/>
</dbReference>
<dbReference type="GO" id="GO:0005770">
    <property type="term" value="C:late endosome"/>
    <property type="evidence" value="ECO:0000314"/>
    <property type="project" value="dictyBase"/>
</dbReference>
<dbReference type="GO" id="GO:0031902">
    <property type="term" value="C:late endosome membrane"/>
    <property type="evidence" value="ECO:0000314"/>
    <property type="project" value="dictyBase"/>
</dbReference>
<dbReference type="GO" id="GO:0044354">
    <property type="term" value="C:macropinosome"/>
    <property type="evidence" value="ECO:0000314"/>
    <property type="project" value="dictyBase"/>
</dbReference>
<dbReference type="GO" id="GO:0001891">
    <property type="term" value="C:phagocytic cup"/>
    <property type="evidence" value="ECO:0000314"/>
    <property type="project" value="dictyBase"/>
</dbReference>
<dbReference type="GO" id="GO:0005886">
    <property type="term" value="C:plasma membrane"/>
    <property type="evidence" value="ECO:0000314"/>
    <property type="project" value="dictyBase"/>
</dbReference>
<dbReference type="GO" id="GO:0005375">
    <property type="term" value="F:copper ion transmembrane transporter activity"/>
    <property type="evidence" value="ECO:0007669"/>
    <property type="project" value="InterPro"/>
</dbReference>
<dbReference type="GO" id="GO:0044325">
    <property type="term" value="F:transmembrane transporter binding"/>
    <property type="evidence" value="ECO:0000314"/>
    <property type="project" value="dictyBase"/>
</dbReference>
<dbReference type="GO" id="GO:0006909">
    <property type="term" value="P:phagocytosis"/>
    <property type="evidence" value="ECO:0007669"/>
    <property type="project" value="UniProtKB-KW"/>
</dbReference>
<dbReference type="GO" id="GO:0009617">
    <property type="term" value="P:response to bacterium"/>
    <property type="evidence" value="ECO:0000314"/>
    <property type="project" value="dictyBase"/>
</dbReference>
<dbReference type="InterPro" id="IPR007274">
    <property type="entry name" value="Cop_transporter"/>
</dbReference>
<dbReference type="PANTHER" id="PTHR12483:SF119">
    <property type="entry name" value="COPPER TRANSPORT PROTEIN-RELATED"/>
    <property type="match status" value="1"/>
</dbReference>
<dbReference type="PANTHER" id="PTHR12483">
    <property type="entry name" value="SOLUTE CARRIER FAMILY 31 COPPER TRANSPORTERS"/>
    <property type="match status" value="1"/>
</dbReference>
<dbReference type="Pfam" id="PF04145">
    <property type="entry name" value="Ctr"/>
    <property type="match status" value="1"/>
</dbReference>
<evidence type="ECO:0000255" key="1"/>
<evidence type="ECO:0000269" key="2">
    <source>
    </source>
</evidence>
<evidence type="ECO:0000305" key="3"/>
<proteinExistence type="evidence at transcript level"/>
<name>P80_DICDI</name>
<comment type="subcellular location">
    <subcellularLocation>
        <location evidence="2">Late endosome membrane</location>
        <topology evidence="2">Single-pass membrane protein</topology>
    </subcellularLocation>
</comment>
<comment type="domain">
    <text evidence="2">The cytoplasmic domain (residues 431-481) is responsible for the endocytosis and localization of the protein to endocytic compartments.</text>
</comment>
<comment type="similarity">
    <text evidence="3">Belongs to the SLC31A transporter family.</text>
</comment>
<accession>Q7YXD4</accession>
<accession>Q54KI5</accession>
<reference key="1">
    <citation type="journal article" date="2001" name="Eur. J. Cell Biol.">
        <title>Membrane sorting in the endocytic and phagocytic pathway of Dictyostelium discoideum.</title>
        <authorList>
            <person name="Ravanel K."/>
            <person name="de Chassey B."/>
            <person name="Cornillon S."/>
            <person name="Benghezal M."/>
            <person name="Zulianello L."/>
            <person name="Gebbie L."/>
            <person name="Letourneur F."/>
            <person name="Cosson P."/>
        </authorList>
    </citation>
    <scope>NUCLEOTIDE SEQUENCE [MRNA]</scope>
    <scope>DOMAIN</scope>
    <scope>SUBCELLULAR LOCATION</scope>
    <source>
        <strain>AX3 / DH1</strain>
    </source>
</reference>
<reference key="2">
    <citation type="journal article" date="2005" name="Nature">
        <title>The genome of the social amoeba Dictyostelium discoideum.</title>
        <authorList>
            <person name="Eichinger L."/>
            <person name="Pachebat J.A."/>
            <person name="Gloeckner G."/>
            <person name="Rajandream M.A."/>
            <person name="Sucgang R."/>
            <person name="Berriman M."/>
            <person name="Song J."/>
            <person name="Olsen R."/>
            <person name="Szafranski K."/>
            <person name="Xu Q."/>
            <person name="Tunggal B."/>
            <person name="Kummerfeld S."/>
            <person name="Madera M."/>
            <person name="Konfortov B.A."/>
            <person name="Rivero F."/>
            <person name="Bankier A.T."/>
            <person name="Lehmann R."/>
            <person name="Hamlin N."/>
            <person name="Davies R."/>
            <person name="Gaudet P."/>
            <person name="Fey P."/>
            <person name="Pilcher K."/>
            <person name="Chen G."/>
            <person name="Saunders D."/>
            <person name="Sodergren E.J."/>
            <person name="Davis P."/>
            <person name="Kerhornou A."/>
            <person name="Nie X."/>
            <person name="Hall N."/>
            <person name="Anjard C."/>
            <person name="Hemphill L."/>
            <person name="Bason N."/>
            <person name="Farbrother P."/>
            <person name="Desany B."/>
            <person name="Just E."/>
            <person name="Morio T."/>
            <person name="Rost R."/>
            <person name="Churcher C.M."/>
            <person name="Cooper J."/>
            <person name="Haydock S."/>
            <person name="van Driessche N."/>
            <person name="Cronin A."/>
            <person name="Goodhead I."/>
            <person name="Muzny D.M."/>
            <person name="Mourier T."/>
            <person name="Pain A."/>
            <person name="Lu M."/>
            <person name="Harper D."/>
            <person name="Lindsay R."/>
            <person name="Hauser H."/>
            <person name="James K.D."/>
            <person name="Quiles M."/>
            <person name="Madan Babu M."/>
            <person name="Saito T."/>
            <person name="Buchrieser C."/>
            <person name="Wardroper A."/>
            <person name="Felder M."/>
            <person name="Thangavelu M."/>
            <person name="Johnson D."/>
            <person name="Knights A."/>
            <person name="Loulseged H."/>
            <person name="Mungall K.L."/>
            <person name="Oliver K."/>
            <person name="Price C."/>
            <person name="Quail M.A."/>
            <person name="Urushihara H."/>
            <person name="Hernandez J."/>
            <person name="Rabbinowitsch E."/>
            <person name="Steffen D."/>
            <person name="Sanders M."/>
            <person name="Ma J."/>
            <person name="Kohara Y."/>
            <person name="Sharp S."/>
            <person name="Simmonds M.N."/>
            <person name="Spiegler S."/>
            <person name="Tivey A."/>
            <person name="Sugano S."/>
            <person name="White B."/>
            <person name="Walker D."/>
            <person name="Woodward J.R."/>
            <person name="Winckler T."/>
            <person name="Tanaka Y."/>
            <person name="Shaulsky G."/>
            <person name="Schleicher M."/>
            <person name="Weinstock G.M."/>
            <person name="Rosenthal A."/>
            <person name="Cox E.C."/>
            <person name="Chisholm R.L."/>
            <person name="Gibbs R.A."/>
            <person name="Loomis W.F."/>
            <person name="Platzer M."/>
            <person name="Kay R.R."/>
            <person name="Williams J.G."/>
            <person name="Dear P.H."/>
            <person name="Noegel A.A."/>
            <person name="Barrell B.G."/>
            <person name="Kuspa A."/>
        </authorList>
    </citation>
    <scope>NUCLEOTIDE SEQUENCE [LARGE SCALE GENOMIC DNA]</scope>
    <source>
        <strain>AX4</strain>
    </source>
</reference>
<organism>
    <name type="scientific">Dictyostelium discoideum</name>
    <name type="common">Social amoeba</name>
    <dbReference type="NCBI Taxonomy" id="44689"/>
    <lineage>
        <taxon>Eukaryota</taxon>
        <taxon>Amoebozoa</taxon>
        <taxon>Evosea</taxon>
        <taxon>Eumycetozoa</taxon>
        <taxon>Dictyostelia</taxon>
        <taxon>Dictyosteliales</taxon>
        <taxon>Dictyosteliaceae</taxon>
        <taxon>Dictyostelium</taxon>
    </lineage>
</organism>
<protein>
    <recommendedName>
        <fullName>Protein P80</fullName>
    </recommendedName>
    <alternativeName>
        <fullName>Endosomal membrane protein</fullName>
    </alternativeName>
</protein>
<feature type="signal peptide" evidence="1">
    <location>
        <begin position="1"/>
        <end position="22"/>
    </location>
</feature>
<feature type="chain" id="PRO_0000328631" description="Protein P80">
    <location>
        <begin position="23"/>
        <end position="530"/>
    </location>
</feature>
<feature type="transmembrane region" description="Helical" evidence="1">
    <location>
        <begin position="491"/>
        <end position="511"/>
    </location>
</feature>
<sequence>MKVISGLLFFILISCSLFLVQGQVDCVTNSSDASCTNFQYPLANITADINNLCGSMPYMPVCTIQQSCNQESSTSGICDPFSILGDSCLHDMPGMSGCNNFKKLCASGSVVEQCSTVDSVTDLPTTMKMWANIKSICNEMTMTGCEKCTILNATCDVLTVYSTLCLAMPEMGQCANWTQMCASSGNMASSPISSGICTDEPTPATDCFTNPSDPSCADYVYTAANANADILNLCKSMPYMTVCSIQKSCNQESSTSGICAPFSILGDSCLHDMPGMNGCSNFKKLCASGSVVEQCSSVDSISNLPTTMQLFAGIKSICTEMAMDGCEKCSGNSPTTTCDVLPVYSSLCMAMPDMSQCANWTKMCSSSGQLYNSQITSDYCVASVADAVPIMRMYFHTGILDYILFKSWVPRTDRQFAGSWFAIFFFAIFFELEKTLRSILEKRWTPNKKDSEDNNLINSSFLSGSYPKFSYRDIIRGCLHAIELTCSYALMLVAMTFNVALFFAVIAGVLVGNILFGRYRNYTPRVTCCE</sequence>